<comment type="function">
    <text evidence="3">Glutaminase catalyzes the hydrolysis of glutamine to glutamic acid and plays a key role in nitrogen metabolism. Catalyzes the hydrolysis not only of L-glutamine but also of D-glutamine.</text>
</comment>
<comment type="catalytic activity">
    <reaction evidence="3">
        <text>L-glutamine + H2O = L-glutamate + NH4(+)</text>
        <dbReference type="Rhea" id="RHEA:15889"/>
        <dbReference type="ChEBI" id="CHEBI:15377"/>
        <dbReference type="ChEBI" id="CHEBI:28938"/>
        <dbReference type="ChEBI" id="CHEBI:29985"/>
        <dbReference type="ChEBI" id="CHEBI:58359"/>
        <dbReference type="EC" id="3.5.1.2"/>
    </reaction>
</comment>
<comment type="activity regulation">
    <text evidence="3">Activity is inhibited by about 80% in the presence of 18% sodium chloride.</text>
</comment>
<comment type="biophysicochemical properties">
    <kinetics>
        <KM evidence="3">1.2 mM for L-glutamine</KM>
    </kinetics>
    <phDependence>
        <text evidence="3">Optimum pH is 9.0.</text>
    </phDependence>
    <temperatureDependence>
        <text evidence="3">Optimum temperature is 37-45 degrees Celsius.</text>
    </temperatureDependence>
</comment>
<comment type="subcellular location">
    <subcellularLocation>
        <location evidence="1">Secreted</location>
    </subcellularLocation>
</comment>
<comment type="biotechnology">
    <text evidence="4">In the fermentation of soy sauce, the traditional Japanese seasoning, glutaminase is one of the most important enzymes in flavor enhancement as it converts glutamine to glutamic acid.</text>
</comment>
<comment type="similarity">
    <text evidence="5">Belongs to the fungal glutaminase gtaA family.</text>
</comment>
<comment type="sequence caution" evidence="5">
    <conflict type="erroneous initiation">
        <sequence resource="EMBL-CDS" id="BAE63498"/>
    </conflict>
    <text>Extended N-terminus.</text>
</comment>
<reference key="1">
    <citation type="journal article" date="2000" name="Appl. Microbiol. Biotechnol.">
        <title>Molecular cloning and characterization of a gene encoding glutaminase from Aspergillus oryzae.</title>
        <authorList>
            <person name="Koibuchi K."/>
            <person name="Nagasaki H."/>
            <person name="Yuasa A."/>
            <person name="Kataoka J."/>
            <person name="Kitamoto K."/>
        </authorList>
    </citation>
    <scope>NUCLEOTIDE SEQUENCE [GENOMIC DNA]</scope>
    <scope>PROTEIN SEQUENCE OF 21-37; 292-298; 407-414; 420-429; 468-496 AND 516-525</scope>
    <scope>FUNCTION</scope>
    <scope>CATALYTIC ACTIVITY</scope>
    <scope>BIOPHYSICOCHEMICAL PROPERTIES</scope>
    <scope>ACTIVITY REGULATION</scope>
    <scope>BIOTECHNOLOGY</scope>
    <source>
        <strain>ATCC 42149 / RIB 40</strain>
    </source>
</reference>
<reference key="2">
    <citation type="journal article" date="2005" name="Nature">
        <title>Genome sequencing and analysis of Aspergillus oryzae.</title>
        <authorList>
            <person name="Machida M."/>
            <person name="Asai K."/>
            <person name="Sano M."/>
            <person name="Tanaka T."/>
            <person name="Kumagai T."/>
            <person name="Terai G."/>
            <person name="Kusumoto K."/>
            <person name="Arima T."/>
            <person name="Akita O."/>
            <person name="Kashiwagi Y."/>
            <person name="Abe K."/>
            <person name="Gomi K."/>
            <person name="Horiuchi H."/>
            <person name="Kitamoto K."/>
            <person name="Kobayashi T."/>
            <person name="Takeuchi M."/>
            <person name="Denning D.W."/>
            <person name="Galagan J.E."/>
            <person name="Nierman W.C."/>
            <person name="Yu J."/>
            <person name="Archer D.B."/>
            <person name="Bennett J.W."/>
            <person name="Bhatnagar D."/>
            <person name="Cleveland T.E."/>
            <person name="Fedorova N.D."/>
            <person name="Gotoh O."/>
            <person name="Horikawa H."/>
            <person name="Hosoyama A."/>
            <person name="Ichinomiya M."/>
            <person name="Igarashi R."/>
            <person name="Iwashita K."/>
            <person name="Juvvadi P.R."/>
            <person name="Kato M."/>
            <person name="Kato Y."/>
            <person name="Kin T."/>
            <person name="Kokubun A."/>
            <person name="Maeda H."/>
            <person name="Maeyama N."/>
            <person name="Maruyama J."/>
            <person name="Nagasaki H."/>
            <person name="Nakajima T."/>
            <person name="Oda K."/>
            <person name="Okada K."/>
            <person name="Paulsen I."/>
            <person name="Sakamoto K."/>
            <person name="Sawano T."/>
            <person name="Takahashi M."/>
            <person name="Takase K."/>
            <person name="Terabayashi Y."/>
            <person name="Wortman J.R."/>
            <person name="Yamada O."/>
            <person name="Yamagata Y."/>
            <person name="Anazawa H."/>
            <person name="Hata Y."/>
            <person name="Koide Y."/>
            <person name="Komori T."/>
            <person name="Koyama Y."/>
            <person name="Minetoki T."/>
            <person name="Suharnan S."/>
            <person name="Tanaka A."/>
            <person name="Isono K."/>
            <person name="Kuhara S."/>
            <person name="Ogasawara N."/>
            <person name="Kikuchi H."/>
        </authorList>
    </citation>
    <scope>NUCLEOTIDE SEQUENCE [LARGE SCALE GENOMIC DNA]</scope>
    <source>
        <strain>ATCC 42149 / RIB 40</strain>
    </source>
</reference>
<evidence type="ECO:0000250" key="1">
    <source>
        <dbReference type="UniProtKB" id="D4AMT2"/>
    </source>
</evidence>
<evidence type="ECO:0000255" key="2">
    <source>
        <dbReference type="PROSITE-ProRule" id="PRU00498"/>
    </source>
</evidence>
<evidence type="ECO:0000269" key="3">
    <source>
    </source>
</evidence>
<evidence type="ECO:0000303" key="4">
    <source>
    </source>
</evidence>
<evidence type="ECO:0000305" key="5"/>
<sequence length="690" mass="76165">MMHFLSFCLSVASLVSYAGAASTFSPARPPALPLAVKSPYLSTWLSAGTDGGNGGYLAGQWPTFWFGQVTGWAGQIRVDNSTYTWMGAIPNTPTVNQTSFEYTSTSSVFTMRVGDMVEMKVKFLSPITPDDLRRQSLVFSYLDVDVESIDGKAHDIQVYADISAEWASGDRNAIAQWDYGVTDDGVAYHKVYRQTQLLFSENTEQAEWGEWYWATDDQDGLSYQSGPDVDVRGAFAKNGKLANSDDKNYRAISTNWPVFAFSRDLGSVKTSAGTLFSIGLAQDSAIQYSGKPEGTTVMPSLWKSYFSTATAALEFFHHDYAAAAALSKDLDDRISKDSIDAAGQDYLTITSLTVRQVFAAVQLTGTPEDPYIFMKEISSNGNMNTVDVIFPAHPIFLYTNPELLKLILKPIYEIQENGKYPNTYAMHDIGTHYPNATGHPKGDDEKMPLEECGNMVIMALAYAQKAKDNDYLSQHYPILNKWTTYLVEDSIYPANQISTDDFAGSLANQTNLALKGIIGIQAMAVISNTTGHPDDASNHSSIAKDYIARWQTLGVAHDANPPHTTLSYGANETHGLLYNLYADRELGLNLVPQSVYDMQNTFYPTVKEKYGVPLDTRHVYTKADWELFTAAVASESVRDMFHQALATWINETPTNRAFTDLYDTQTGNYPAGITFIARPVMGGAFALLIL</sequence>
<feature type="signal peptide" evidence="3">
    <location>
        <begin position="1"/>
        <end position="20"/>
    </location>
</feature>
<feature type="chain" id="PRO_5004216798" description="Glutaminase A">
    <location>
        <begin position="21"/>
        <end position="690"/>
    </location>
</feature>
<feature type="glycosylation site" description="N-linked (GlcNAc...) asparagine" evidence="2">
    <location>
        <position position="80"/>
    </location>
</feature>
<feature type="glycosylation site" description="N-linked (GlcNAc...) asparagine" evidence="2">
    <location>
        <position position="96"/>
    </location>
</feature>
<feature type="glycosylation site" description="N-linked (GlcNAc...) asparagine" evidence="2">
    <location>
        <position position="435"/>
    </location>
</feature>
<feature type="glycosylation site" description="N-linked (GlcNAc...) asparagine" evidence="2">
    <location>
        <position position="508"/>
    </location>
</feature>
<feature type="glycosylation site" description="N-linked (GlcNAc...) asparagine" evidence="2">
    <location>
        <position position="528"/>
    </location>
</feature>
<feature type="glycosylation site" description="N-linked (GlcNAc...) asparagine" evidence="2">
    <location>
        <position position="538"/>
    </location>
</feature>
<feature type="glycosylation site" description="N-linked (GlcNAc...) asparagine" evidence="2">
    <location>
        <position position="571"/>
    </location>
</feature>
<accession>Q2U4L7</accession>
<accession>Q9UVX9</accession>
<protein>
    <recommendedName>
        <fullName evidence="4">Glutaminase A</fullName>
        <ecNumber evidence="3">3.5.1.2</ecNumber>
    </recommendedName>
</protein>
<name>GTAA_ASPOR</name>
<keyword id="KW-0903">Direct protein sequencing</keyword>
<keyword id="KW-0325">Glycoprotein</keyword>
<keyword id="KW-0378">Hydrolase</keyword>
<keyword id="KW-1185">Reference proteome</keyword>
<keyword id="KW-0964">Secreted</keyword>
<keyword id="KW-0732">Signal</keyword>
<dbReference type="EC" id="3.5.1.2" evidence="3"/>
<dbReference type="EMBL" id="BA000054">
    <property type="protein sequence ID" value="BAE63498.1"/>
    <property type="status" value="ALT_SEQ"/>
    <property type="molecule type" value="Genomic_DNA"/>
</dbReference>
<dbReference type="EMBL" id="AB029552">
    <property type="protein sequence ID" value="BAA86934.1"/>
    <property type="molecule type" value="Genomic_DNA"/>
</dbReference>
<dbReference type="RefSeq" id="XP_001824631.2">
    <property type="nucleotide sequence ID" value="XM_001824579.2"/>
</dbReference>
<dbReference type="SMR" id="Q2U4L7"/>
<dbReference type="STRING" id="510516.Q2U4L7"/>
<dbReference type="GlyCosmos" id="Q2U4L7">
    <property type="glycosylation" value="7 sites, No reported glycans"/>
</dbReference>
<dbReference type="EnsemblFungi" id="BAE63498">
    <property type="protein sequence ID" value="BAE63498"/>
    <property type="gene ID" value="AO090020000289"/>
</dbReference>
<dbReference type="GeneID" id="5996717"/>
<dbReference type="KEGG" id="aor:AO090020000289"/>
<dbReference type="HOGENOM" id="CLU_008020_1_1_1"/>
<dbReference type="SABIO-RK" id="Q2U4L7"/>
<dbReference type="Proteomes" id="UP000006564">
    <property type="component" value="Chromosome 6"/>
</dbReference>
<dbReference type="GO" id="GO:0005576">
    <property type="term" value="C:extracellular region"/>
    <property type="evidence" value="ECO:0007669"/>
    <property type="project" value="UniProtKB-SubCell"/>
</dbReference>
<dbReference type="GO" id="GO:0004359">
    <property type="term" value="F:glutaminase activity"/>
    <property type="evidence" value="ECO:0007669"/>
    <property type="project" value="UniProtKB-EC"/>
</dbReference>
<dbReference type="GO" id="GO:0005975">
    <property type="term" value="P:carbohydrate metabolic process"/>
    <property type="evidence" value="ECO:0007669"/>
    <property type="project" value="InterPro"/>
</dbReference>
<dbReference type="InterPro" id="IPR008928">
    <property type="entry name" value="6-hairpin_glycosidase_sf"/>
</dbReference>
<dbReference type="InterPro" id="IPR052743">
    <property type="entry name" value="Glutaminase_GtaA"/>
</dbReference>
<dbReference type="InterPro" id="IPR032514">
    <property type="entry name" value="GtaA_central"/>
</dbReference>
<dbReference type="InterPro" id="IPR033433">
    <property type="entry name" value="GtaA_N"/>
</dbReference>
<dbReference type="PANTHER" id="PTHR31987:SF1">
    <property type="entry name" value="GLUTAMINASE A"/>
    <property type="match status" value="1"/>
</dbReference>
<dbReference type="PANTHER" id="PTHR31987">
    <property type="entry name" value="GLUTAMINASE A-RELATED"/>
    <property type="match status" value="1"/>
</dbReference>
<dbReference type="Pfam" id="PF17168">
    <property type="entry name" value="DUF5127"/>
    <property type="match status" value="1"/>
</dbReference>
<dbReference type="Pfam" id="PF16335">
    <property type="entry name" value="GtaA_6_Hairpin"/>
    <property type="match status" value="1"/>
</dbReference>
<dbReference type="SUPFAM" id="SSF48208">
    <property type="entry name" value="Six-hairpin glycosidases"/>
    <property type="match status" value="1"/>
</dbReference>
<organism>
    <name type="scientific">Aspergillus oryzae (strain ATCC 42149 / RIB 40)</name>
    <name type="common">Yellow koji mold</name>
    <dbReference type="NCBI Taxonomy" id="510516"/>
    <lineage>
        <taxon>Eukaryota</taxon>
        <taxon>Fungi</taxon>
        <taxon>Dikarya</taxon>
        <taxon>Ascomycota</taxon>
        <taxon>Pezizomycotina</taxon>
        <taxon>Eurotiomycetes</taxon>
        <taxon>Eurotiomycetidae</taxon>
        <taxon>Eurotiales</taxon>
        <taxon>Aspergillaceae</taxon>
        <taxon>Aspergillus</taxon>
        <taxon>Aspergillus subgen. Circumdati</taxon>
    </lineage>
</organism>
<proteinExistence type="evidence at protein level"/>
<gene>
    <name evidence="4" type="primary">gtaA</name>
    <name type="ORF">AO090020000289</name>
</gene>